<reference key="1">
    <citation type="journal article" date="2007" name="Environ. Microbiol.">
        <title>Whole-genome analysis of the ammonia-oxidizing bacterium, Nitrosomonas eutropha C91: implications for niche adaptation.</title>
        <authorList>
            <person name="Stein L.Y."/>
            <person name="Arp D.J."/>
            <person name="Berube P.M."/>
            <person name="Chain P.S."/>
            <person name="Hauser L."/>
            <person name="Jetten M.S."/>
            <person name="Klotz M.G."/>
            <person name="Larimer F.W."/>
            <person name="Norton J.M."/>
            <person name="Op den Camp H.J.M."/>
            <person name="Shin M."/>
            <person name="Wei X."/>
        </authorList>
    </citation>
    <scope>NUCLEOTIDE SEQUENCE [LARGE SCALE GENOMIC DNA]</scope>
    <source>
        <strain>DSM 101675 / C91 / Nm57</strain>
    </source>
</reference>
<evidence type="ECO:0000255" key="1">
    <source>
        <dbReference type="HAMAP-Rule" id="MF_01454"/>
    </source>
</evidence>
<evidence type="ECO:0000255" key="2">
    <source>
        <dbReference type="PROSITE-ProRule" id="PRU01231"/>
    </source>
</evidence>
<feature type="chain" id="PRO_0000386093" description="GTPase Obg">
    <location>
        <begin position="1"/>
        <end position="343"/>
    </location>
</feature>
<feature type="domain" description="Obg" evidence="2">
    <location>
        <begin position="1"/>
        <end position="159"/>
    </location>
</feature>
<feature type="domain" description="OBG-type G" evidence="1">
    <location>
        <begin position="160"/>
        <end position="334"/>
    </location>
</feature>
<feature type="binding site" evidence="1">
    <location>
        <begin position="166"/>
        <end position="173"/>
    </location>
    <ligand>
        <name>GTP</name>
        <dbReference type="ChEBI" id="CHEBI:37565"/>
    </ligand>
</feature>
<feature type="binding site" evidence="1">
    <location>
        <position position="173"/>
    </location>
    <ligand>
        <name>Mg(2+)</name>
        <dbReference type="ChEBI" id="CHEBI:18420"/>
    </ligand>
</feature>
<feature type="binding site" evidence="1">
    <location>
        <begin position="191"/>
        <end position="195"/>
    </location>
    <ligand>
        <name>GTP</name>
        <dbReference type="ChEBI" id="CHEBI:37565"/>
    </ligand>
</feature>
<feature type="binding site" evidence="1">
    <location>
        <position position="193"/>
    </location>
    <ligand>
        <name>Mg(2+)</name>
        <dbReference type="ChEBI" id="CHEBI:18420"/>
    </ligand>
</feature>
<feature type="binding site" evidence="1">
    <location>
        <begin position="213"/>
        <end position="216"/>
    </location>
    <ligand>
        <name>GTP</name>
        <dbReference type="ChEBI" id="CHEBI:37565"/>
    </ligand>
</feature>
<feature type="binding site" evidence="1">
    <location>
        <begin position="284"/>
        <end position="287"/>
    </location>
    <ligand>
        <name>GTP</name>
        <dbReference type="ChEBI" id="CHEBI:37565"/>
    </ligand>
</feature>
<feature type="binding site" evidence="1">
    <location>
        <begin position="315"/>
        <end position="317"/>
    </location>
    <ligand>
        <name>GTP</name>
        <dbReference type="ChEBI" id="CHEBI:37565"/>
    </ligand>
</feature>
<proteinExistence type="inferred from homology"/>
<accession>Q0AHG5</accession>
<dbReference type="EC" id="3.6.5.-" evidence="1"/>
<dbReference type="EMBL" id="CP000450">
    <property type="protein sequence ID" value="ABI59217.1"/>
    <property type="molecule type" value="Genomic_DNA"/>
</dbReference>
<dbReference type="RefSeq" id="WP_011634041.1">
    <property type="nucleotide sequence ID" value="NC_008344.1"/>
</dbReference>
<dbReference type="SMR" id="Q0AHG5"/>
<dbReference type="STRING" id="335283.Neut_0957"/>
<dbReference type="KEGG" id="net:Neut_0957"/>
<dbReference type="eggNOG" id="COG0536">
    <property type="taxonomic scope" value="Bacteria"/>
</dbReference>
<dbReference type="HOGENOM" id="CLU_011747_2_0_4"/>
<dbReference type="OrthoDB" id="9807318at2"/>
<dbReference type="Proteomes" id="UP000001966">
    <property type="component" value="Chromosome"/>
</dbReference>
<dbReference type="GO" id="GO:0005737">
    <property type="term" value="C:cytoplasm"/>
    <property type="evidence" value="ECO:0007669"/>
    <property type="project" value="UniProtKB-SubCell"/>
</dbReference>
<dbReference type="GO" id="GO:0005525">
    <property type="term" value="F:GTP binding"/>
    <property type="evidence" value="ECO:0007669"/>
    <property type="project" value="UniProtKB-UniRule"/>
</dbReference>
<dbReference type="GO" id="GO:0003924">
    <property type="term" value="F:GTPase activity"/>
    <property type="evidence" value="ECO:0007669"/>
    <property type="project" value="UniProtKB-UniRule"/>
</dbReference>
<dbReference type="GO" id="GO:0000287">
    <property type="term" value="F:magnesium ion binding"/>
    <property type="evidence" value="ECO:0007669"/>
    <property type="project" value="InterPro"/>
</dbReference>
<dbReference type="GO" id="GO:0042254">
    <property type="term" value="P:ribosome biogenesis"/>
    <property type="evidence" value="ECO:0007669"/>
    <property type="project" value="UniProtKB-UniRule"/>
</dbReference>
<dbReference type="CDD" id="cd01898">
    <property type="entry name" value="Obg"/>
    <property type="match status" value="1"/>
</dbReference>
<dbReference type="FunFam" id="2.70.210.12:FF:000001">
    <property type="entry name" value="GTPase Obg"/>
    <property type="match status" value="1"/>
</dbReference>
<dbReference type="Gene3D" id="2.70.210.12">
    <property type="entry name" value="GTP1/OBG domain"/>
    <property type="match status" value="1"/>
</dbReference>
<dbReference type="Gene3D" id="3.40.50.300">
    <property type="entry name" value="P-loop containing nucleotide triphosphate hydrolases"/>
    <property type="match status" value="1"/>
</dbReference>
<dbReference type="HAMAP" id="MF_01454">
    <property type="entry name" value="GTPase_Obg"/>
    <property type="match status" value="1"/>
</dbReference>
<dbReference type="InterPro" id="IPR031167">
    <property type="entry name" value="G_OBG"/>
</dbReference>
<dbReference type="InterPro" id="IPR006073">
    <property type="entry name" value="GTP-bd"/>
</dbReference>
<dbReference type="InterPro" id="IPR014100">
    <property type="entry name" value="GTP-bd_Obg/CgtA"/>
</dbReference>
<dbReference type="InterPro" id="IPR006074">
    <property type="entry name" value="GTP1-OBG_CS"/>
</dbReference>
<dbReference type="InterPro" id="IPR006169">
    <property type="entry name" value="GTP1_OBG_dom"/>
</dbReference>
<dbReference type="InterPro" id="IPR036726">
    <property type="entry name" value="GTP1_OBG_dom_sf"/>
</dbReference>
<dbReference type="InterPro" id="IPR045086">
    <property type="entry name" value="OBG_GTPase"/>
</dbReference>
<dbReference type="InterPro" id="IPR027417">
    <property type="entry name" value="P-loop_NTPase"/>
</dbReference>
<dbReference type="NCBIfam" id="TIGR02729">
    <property type="entry name" value="Obg_CgtA"/>
    <property type="match status" value="1"/>
</dbReference>
<dbReference type="NCBIfam" id="NF008955">
    <property type="entry name" value="PRK12297.1"/>
    <property type="match status" value="1"/>
</dbReference>
<dbReference type="NCBIfam" id="NF008956">
    <property type="entry name" value="PRK12299.1"/>
    <property type="match status" value="1"/>
</dbReference>
<dbReference type="PANTHER" id="PTHR11702">
    <property type="entry name" value="DEVELOPMENTALLY REGULATED GTP-BINDING PROTEIN-RELATED"/>
    <property type="match status" value="1"/>
</dbReference>
<dbReference type="PANTHER" id="PTHR11702:SF31">
    <property type="entry name" value="MITOCHONDRIAL RIBOSOME-ASSOCIATED GTPASE 2"/>
    <property type="match status" value="1"/>
</dbReference>
<dbReference type="Pfam" id="PF01018">
    <property type="entry name" value="GTP1_OBG"/>
    <property type="match status" value="1"/>
</dbReference>
<dbReference type="Pfam" id="PF01926">
    <property type="entry name" value="MMR_HSR1"/>
    <property type="match status" value="1"/>
</dbReference>
<dbReference type="PIRSF" id="PIRSF002401">
    <property type="entry name" value="GTP_bd_Obg/CgtA"/>
    <property type="match status" value="1"/>
</dbReference>
<dbReference type="PRINTS" id="PR00326">
    <property type="entry name" value="GTP1OBG"/>
</dbReference>
<dbReference type="SUPFAM" id="SSF82051">
    <property type="entry name" value="Obg GTP-binding protein N-terminal domain"/>
    <property type="match status" value="1"/>
</dbReference>
<dbReference type="SUPFAM" id="SSF52540">
    <property type="entry name" value="P-loop containing nucleoside triphosphate hydrolases"/>
    <property type="match status" value="1"/>
</dbReference>
<dbReference type="PROSITE" id="PS51710">
    <property type="entry name" value="G_OBG"/>
    <property type="match status" value="1"/>
</dbReference>
<dbReference type="PROSITE" id="PS00905">
    <property type="entry name" value="GTP1_OBG"/>
    <property type="match status" value="1"/>
</dbReference>
<dbReference type="PROSITE" id="PS51883">
    <property type="entry name" value="OBG"/>
    <property type="match status" value="1"/>
</dbReference>
<gene>
    <name evidence="1" type="primary">obg</name>
    <name type="ordered locus">Neut_0957</name>
</gene>
<organism>
    <name type="scientific">Nitrosomonas eutropha (strain DSM 101675 / C91 / Nm57)</name>
    <dbReference type="NCBI Taxonomy" id="335283"/>
    <lineage>
        <taxon>Bacteria</taxon>
        <taxon>Pseudomonadati</taxon>
        <taxon>Pseudomonadota</taxon>
        <taxon>Betaproteobacteria</taxon>
        <taxon>Nitrosomonadales</taxon>
        <taxon>Nitrosomonadaceae</taxon>
        <taxon>Nitrosomonas</taxon>
    </lineage>
</organism>
<keyword id="KW-0963">Cytoplasm</keyword>
<keyword id="KW-0342">GTP-binding</keyword>
<keyword id="KW-0378">Hydrolase</keyword>
<keyword id="KW-0460">Magnesium</keyword>
<keyword id="KW-0479">Metal-binding</keyword>
<keyword id="KW-0547">Nucleotide-binding</keyword>
<protein>
    <recommendedName>
        <fullName evidence="1">GTPase Obg</fullName>
        <ecNumber evidence="1">3.6.5.-</ecNumber>
    </recommendedName>
    <alternativeName>
        <fullName evidence="1">GTP-binding protein Obg</fullName>
    </alternativeName>
</protein>
<name>OBG_NITEC</name>
<sequence>MKYIDEVKIQVFAGDGGNGVASFRREKFIPKGGPDGGDGGRGGSIYALADHNLNTLIDYRFTPVFRAKRGENGRGSDCYGKGAEDIVLRMPVGTIITDYMTGELVADLKQNQQKVLLAKGGKGGLGNLHFKSSTNRAPRQFTHGEAGEQFELKLELRVLADVGLLGLPNAGKSTLIRAVSAARPKVADYPFTTLYPNLGVVRVDAGRSFIMADIPGLIEGAAEGAGLGHRFLKHLSRTHLLLHIIDVAPFDENIDPVQSARALVDELRKFDEVLYRKPRWLIFNKVDLLPEDEQQAVCTHLLQALDWEDRWFAISALTGRGCQALTYAIMGYLEQLQPVTEET</sequence>
<comment type="function">
    <text evidence="1">An essential GTPase which binds GTP, GDP and possibly (p)ppGpp with moderate affinity, with high nucleotide exchange rates and a fairly low GTP hydrolysis rate. Plays a role in control of the cell cycle, stress response, ribosome biogenesis and in those bacteria that undergo differentiation, in morphogenesis control.</text>
</comment>
<comment type="cofactor">
    <cofactor evidence="1">
        <name>Mg(2+)</name>
        <dbReference type="ChEBI" id="CHEBI:18420"/>
    </cofactor>
</comment>
<comment type="subunit">
    <text evidence="1">Monomer.</text>
</comment>
<comment type="subcellular location">
    <subcellularLocation>
        <location evidence="1">Cytoplasm</location>
    </subcellularLocation>
</comment>
<comment type="similarity">
    <text evidence="1">Belongs to the TRAFAC class OBG-HflX-like GTPase superfamily. OBG GTPase family.</text>
</comment>